<organism>
    <name type="scientific">Mus musculus</name>
    <name type="common">Mouse</name>
    <dbReference type="NCBI Taxonomy" id="10090"/>
    <lineage>
        <taxon>Eukaryota</taxon>
        <taxon>Metazoa</taxon>
        <taxon>Chordata</taxon>
        <taxon>Craniata</taxon>
        <taxon>Vertebrata</taxon>
        <taxon>Euteleostomi</taxon>
        <taxon>Mammalia</taxon>
        <taxon>Eutheria</taxon>
        <taxon>Euarchontoglires</taxon>
        <taxon>Glires</taxon>
        <taxon>Rodentia</taxon>
        <taxon>Myomorpha</taxon>
        <taxon>Muroidea</taxon>
        <taxon>Muridae</taxon>
        <taxon>Murinae</taxon>
        <taxon>Mus</taxon>
        <taxon>Mus</taxon>
    </lineage>
</organism>
<sequence>MESVMSKYENQILIFPDYLEEFPDTDELVWILGKQHPLKTEKSKLLSDISARLWFTYRRKFSPIGGTGPSSDAGWGCMLRCGQMMLAQALICRHLGRDWNWERQKEQPKEYQRILQCFLDRKDCCYSIHQMAQMGVGEGKSIGEWFGPNTVAQVIKKLALFDEWNSLAVYVSMDNTVVIEDIKKMCCVLPVGAADPAGDFLTASNQSRDTSVPCSAWKPLLLIVPLRLGINQINPVYVEAFKECFKMPQSLGALGGKPNNAYYFIGFLGDELIFLDPHTTQTFVDIEESGLVDDQTFHCLQSPQRMSILNLDPSVALGFFCKEEKDFDNWCSLVQKEILKENLRMFELVQKHPSHWPPFVPPAKPEVTTTGAEFIESTEQLEDFELEEDFEILSVG</sequence>
<evidence type="ECO:0000250" key="1">
    <source>
        <dbReference type="UniProtKB" id="Q8BGE6"/>
    </source>
</evidence>
<evidence type="ECO:0000250" key="2">
    <source>
        <dbReference type="UniProtKB" id="Q8WYN0"/>
    </source>
</evidence>
<evidence type="ECO:0000250" key="3">
    <source>
        <dbReference type="UniProtKB" id="Q9Y4P1"/>
    </source>
</evidence>
<evidence type="ECO:0000303" key="4">
    <source>
    </source>
</evidence>
<evidence type="ECO:0000305" key="5"/>
<evidence type="ECO:0000312" key="6">
    <source>
        <dbReference type="MGI" id="MGI:2147903"/>
    </source>
</evidence>
<protein>
    <recommendedName>
        <fullName evidence="5">Cysteine protease ATG4A</fullName>
        <ecNumber evidence="2">3.4.22.-</ecNumber>
    </recommendedName>
    <alternativeName>
        <fullName>AUT-like 2 cysteine endopeptidase</fullName>
    </alternativeName>
    <alternativeName>
        <fullName evidence="4">Autophagy-related cysteine endopeptidase 2</fullName>
        <shortName evidence="4">Autophagin-2</shortName>
    </alternativeName>
    <alternativeName>
        <fullName evidence="2">Autophagy-related protein 4 homolog A</fullName>
    </alternativeName>
</protein>
<comment type="function">
    <text evidence="2">Cysteine protease that plays a key role in autophagy by mediating both proteolytic activation and delipidation of ATG8 family proteins. The protease activity is required for proteolytic activation of ATG8 family proteins: cleaves the C-terminal amino acid of ATG8 proteins to reveal a C-terminal glycine. Exposure of the glycine at the C-terminus is essential for ATG8 proteins conjugation to phosphatidylethanolamine (PE) and insertion to membranes, which is necessary for autophagy. Preferred substrate is GABARAPL2 followed by MAP1LC3A and GABARAP. Protease activity is also required to counteract formation of high-molecular weight conjugates of ATG8 proteins (ATG8ylation): acts as a deubiquitinating-like enzyme that removes ATG8 conjugated to other proteins, such as ATG3. In addition to the protease activity, also mediates delipidation of ATG8 family proteins. Catalyzes delipidation of PE-conjugated forms of ATG8 proteins during macroautophagy. Compared to ATG4B, the major protein for proteolytic activation of ATG8 proteins, shows weaker ability to cleave the C-terminal amino acid of ATG8 proteins, while it displays stronger delipidation activity. Involved in phagophore growth during mitophagy independently of its protease activity and of ATG8 proteins: acts by regulating ATG9A trafficking to mitochondria and promoting phagophore-endoplasmic reticulum contacts during the lipid transfer phase of mitophagy.</text>
</comment>
<comment type="catalytic activity">
    <reaction evidence="2">
        <text>[protein]-C-terminal L-amino acid-glycyl-phosphatidylethanolamide + H2O = [protein]-C-terminal L-amino acid-glycine + a 1,2-diacyl-sn-glycero-3-phosphoethanolamine</text>
        <dbReference type="Rhea" id="RHEA:67548"/>
        <dbReference type="Rhea" id="RHEA-COMP:17323"/>
        <dbReference type="Rhea" id="RHEA-COMP:17324"/>
        <dbReference type="ChEBI" id="CHEBI:15377"/>
        <dbReference type="ChEBI" id="CHEBI:64612"/>
        <dbReference type="ChEBI" id="CHEBI:172940"/>
        <dbReference type="ChEBI" id="CHEBI:172941"/>
    </reaction>
    <physiologicalReaction direction="left-to-right" evidence="2">
        <dbReference type="Rhea" id="RHEA:67549"/>
    </physiologicalReaction>
</comment>
<comment type="activity regulation">
    <text evidence="2">Inhibited by N-ethylmaleimide. Redox-regulated during autophagy since reducing conditions activate ATG4A whereas an oxidizing environment such as the presence of H(2)O(2) inhibits its activity.</text>
</comment>
<comment type="subunit">
    <text evidence="2">Interacts with ATG9A; the interaction is direct.</text>
</comment>
<comment type="subcellular location">
    <subcellularLocation>
        <location evidence="1">Cytoplasm</location>
    </subcellularLocation>
</comment>
<comment type="domain">
    <text evidence="2">The LIR motif (LC3-interacting region) is required for the interaction with the ATG8 family proteins. Required for proteolytic activation and delipidation of ATG8 proteins.</text>
</comment>
<comment type="similarity">
    <text evidence="5">Belongs to the peptidase C54 family.</text>
</comment>
<feature type="chain" id="PRO_0000215839" description="Cysteine protease ATG4A">
    <location>
        <begin position="1"/>
        <end position="396"/>
    </location>
</feature>
<feature type="short sequence motif" description="LIR" evidence="2">
    <location>
        <begin position="390"/>
        <end position="393"/>
    </location>
</feature>
<feature type="active site" description="Nucleophile" evidence="3">
    <location>
        <position position="77"/>
    </location>
</feature>
<feature type="active site" evidence="3">
    <location>
        <position position="276"/>
    </location>
</feature>
<feature type="active site" evidence="3">
    <location>
        <position position="278"/>
    </location>
</feature>
<feature type="sequence conflict" description="In Ref. 1; CAD43221." evidence="5" ref="1">
    <original>L</original>
    <variation>F</variation>
    <location>
        <position position="38"/>
    </location>
</feature>
<feature type="sequence conflict" description="In Ref. 1; CAD43221." evidence="5" ref="1">
    <original>A</original>
    <variation>T</variation>
    <location>
        <position position="159"/>
    </location>
</feature>
<feature type="sequence conflict" description="In Ref. 3; BAC30924." evidence="5" ref="3">
    <original>V</original>
    <variation>D</variation>
    <location>
        <position position="171"/>
    </location>
</feature>
<feature type="sequence conflict" description="In Ref. 1; CAD43221." evidence="5" ref="1">
    <original>A</original>
    <variation>V</variation>
    <location>
        <position position="203"/>
    </location>
</feature>
<accession>Q8C9S8</accession>
<accession>Q811B8</accession>
<dbReference type="EC" id="3.4.22.-" evidence="2"/>
<dbReference type="EMBL" id="AJ504654">
    <property type="protein sequence ID" value="CAD43221.1"/>
    <property type="molecule type" value="mRNA"/>
</dbReference>
<dbReference type="EMBL" id="AK041379">
    <property type="protein sequence ID" value="BAC30924.1"/>
    <property type="molecule type" value="mRNA"/>
</dbReference>
<dbReference type="CCDS" id="CCDS85810.1"/>
<dbReference type="RefSeq" id="NP_777364.3">
    <property type="nucleotide sequence ID" value="NM_174875.3"/>
</dbReference>
<dbReference type="SMR" id="Q8C9S8"/>
<dbReference type="FunCoup" id="Q8C9S8">
    <property type="interactions" value="874"/>
</dbReference>
<dbReference type="STRING" id="10090.ENSMUSP00000108595"/>
<dbReference type="MEROPS" id="C54.002"/>
<dbReference type="PhosphoSitePlus" id="Q8C9S8"/>
<dbReference type="PaxDb" id="10090-ENSMUSP00000108595"/>
<dbReference type="ProteomicsDB" id="277088"/>
<dbReference type="Pumba" id="Q8C9S8"/>
<dbReference type="DNASU" id="666468"/>
<dbReference type="Ensembl" id="ENSMUST00000112971.2">
    <property type="protein sequence ID" value="ENSMUSP00000108595.2"/>
    <property type="gene ID" value="ENSMUSG00000079418.6"/>
</dbReference>
<dbReference type="GeneID" id="666468"/>
<dbReference type="KEGG" id="mmu:666468"/>
<dbReference type="UCSC" id="uc029unx.1">
    <property type="organism name" value="mouse"/>
</dbReference>
<dbReference type="AGR" id="MGI:2147903"/>
<dbReference type="CTD" id="115201"/>
<dbReference type="MGI" id="MGI:2147903">
    <property type="gene designation" value="Atg4a"/>
</dbReference>
<dbReference type="VEuPathDB" id="HostDB:ENSMUSG00000079418"/>
<dbReference type="eggNOG" id="KOG2674">
    <property type="taxonomic scope" value="Eukaryota"/>
</dbReference>
<dbReference type="GeneTree" id="ENSGT00530000063000"/>
<dbReference type="HOGENOM" id="CLU_021259_0_1_1"/>
<dbReference type="InParanoid" id="Q8C9S8"/>
<dbReference type="OMA" id="TGFGCMI"/>
<dbReference type="OrthoDB" id="2960936at2759"/>
<dbReference type="PhylomeDB" id="Q8C9S8"/>
<dbReference type="TreeFam" id="TF314847"/>
<dbReference type="Reactome" id="R-MMU-1632852">
    <property type="pathway name" value="Macroautophagy"/>
</dbReference>
<dbReference type="BioGRID-ORCS" id="666468">
    <property type="hits" value="2 hits in 55 CRISPR screens"/>
</dbReference>
<dbReference type="PRO" id="PR:Q8C9S8"/>
<dbReference type="Proteomes" id="UP000000589">
    <property type="component" value="Chromosome X"/>
</dbReference>
<dbReference type="RNAct" id="Q8C9S8">
    <property type="molecule type" value="protein"/>
</dbReference>
<dbReference type="Bgee" id="ENSMUSG00000079418">
    <property type="expression patterns" value="Expressed in bone marrow and 63 other cell types or tissues"/>
</dbReference>
<dbReference type="ExpressionAtlas" id="Q8C9S8">
    <property type="expression patterns" value="baseline and differential"/>
</dbReference>
<dbReference type="GO" id="GO:0005737">
    <property type="term" value="C:cytoplasm"/>
    <property type="evidence" value="ECO:0007669"/>
    <property type="project" value="UniProtKB-SubCell"/>
</dbReference>
<dbReference type="GO" id="GO:0008234">
    <property type="term" value="F:cysteine-type peptidase activity"/>
    <property type="evidence" value="ECO:0000250"/>
    <property type="project" value="UniProtKB"/>
</dbReference>
<dbReference type="GO" id="GO:0019786">
    <property type="term" value="F:protein-phosphatidylethanolamide deconjugating activity"/>
    <property type="evidence" value="ECO:0000250"/>
    <property type="project" value="UniProtKB"/>
</dbReference>
<dbReference type="GO" id="GO:0006914">
    <property type="term" value="P:autophagy"/>
    <property type="evidence" value="ECO:0000250"/>
    <property type="project" value="UniProtKB"/>
</dbReference>
<dbReference type="GO" id="GO:0006629">
    <property type="term" value="P:lipid metabolic process"/>
    <property type="evidence" value="ECO:0007669"/>
    <property type="project" value="UniProtKB-KW"/>
</dbReference>
<dbReference type="GO" id="GO:0051697">
    <property type="term" value="P:protein delipidation"/>
    <property type="evidence" value="ECO:0000250"/>
    <property type="project" value="UniProtKB"/>
</dbReference>
<dbReference type="GO" id="GO:0015031">
    <property type="term" value="P:protein transport"/>
    <property type="evidence" value="ECO:0007669"/>
    <property type="project" value="UniProtKB-KW"/>
</dbReference>
<dbReference type="GO" id="GO:0006508">
    <property type="term" value="P:proteolysis"/>
    <property type="evidence" value="ECO:0007669"/>
    <property type="project" value="UniProtKB-KW"/>
</dbReference>
<dbReference type="InterPro" id="IPR046793">
    <property type="entry name" value="ATG4_LIR"/>
</dbReference>
<dbReference type="InterPro" id="IPR038765">
    <property type="entry name" value="Papain-like_cys_pep_sf"/>
</dbReference>
<dbReference type="InterPro" id="IPR005078">
    <property type="entry name" value="Peptidase_C54"/>
</dbReference>
<dbReference type="InterPro" id="IPR046792">
    <property type="entry name" value="Peptidase_C54_cat"/>
</dbReference>
<dbReference type="PANTHER" id="PTHR22624">
    <property type="entry name" value="CYSTEINE PROTEASE ATG4"/>
    <property type="match status" value="1"/>
</dbReference>
<dbReference type="PANTHER" id="PTHR22624:SF35">
    <property type="entry name" value="CYSTEINE PROTEASE ATG4A"/>
    <property type="match status" value="1"/>
</dbReference>
<dbReference type="Pfam" id="PF20166">
    <property type="entry name" value="ATG4_LIR"/>
    <property type="match status" value="1"/>
</dbReference>
<dbReference type="Pfam" id="PF03416">
    <property type="entry name" value="Peptidase_C54"/>
    <property type="match status" value="1"/>
</dbReference>
<dbReference type="SUPFAM" id="SSF54001">
    <property type="entry name" value="Cysteine proteinases"/>
    <property type="match status" value="1"/>
</dbReference>
<reference key="1">
    <citation type="journal article" date="2003" name="J. Biol. Chem.">
        <title>Human autophagins, a family of cysteine proteinases potentially implicated in cell degradation by autophagy.</title>
        <authorList>
            <person name="Marino G."/>
            <person name="Uria J.A."/>
            <person name="Puente X.S."/>
            <person name="Quesada V."/>
            <person name="Bordallo J."/>
            <person name="Lopez-Otin C."/>
        </authorList>
    </citation>
    <scope>NUCLEOTIDE SEQUENCE [MRNA]</scope>
    <scope>RETRACTED PAPER</scope>
    <source>
        <strain>C57BL/6J</strain>
    </source>
</reference>
<reference key="2">
    <citation type="journal article" date="2019" name="J. Biol. Chem.">
        <authorList>
            <person name="Marino G."/>
            <person name="Uria J.A."/>
            <person name="Puente X.S."/>
            <person name="Quesada V."/>
            <person name="Bordallo J."/>
            <person name="Lopez-Otin C."/>
        </authorList>
    </citation>
    <scope>RETRACTION NOTICE OF PUBMED:12446702</scope>
</reference>
<reference key="3">
    <citation type="journal article" date="2005" name="Science">
        <title>The transcriptional landscape of the mammalian genome.</title>
        <authorList>
            <person name="Carninci P."/>
            <person name="Kasukawa T."/>
            <person name="Katayama S."/>
            <person name="Gough J."/>
            <person name="Frith M.C."/>
            <person name="Maeda N."/>
            <person name="Oyama R."/>
            <person name="Ravasi T."/>
            <person name="Lenhard B."/>
            <person name="Wells C."/>
            <person name="Kodzius R."/>
            <person name="Shimokawa K."/>
            <person name="Bajic V.B."/>
            <person name="Brenner S.E."/>
            <person name="Batalov S."/>
            <person name="Forrest A.R."/>
            <person name="Zavolan M."/>
            <person name="Davis M.J."/>
            <person name="Wilming L.G."/>
            <person name="Aidinis V."/>
            <person name="Allen J.E."/>
            <person name="Ambesi-Impiombato A."/>
            <person name="Apweiler R."/>
            <person name="Aturaliya R.N."/>
            <person name="Bailey T.L."/>
            <person name="Bansal M."/>
            <person name="Baxter L."/>
            <person name="Beisel K.W."/>
            <person name="Bersano T."/>
            <person name="Bono H."/>
            <person name="Chalk A.M."/>
            <person name="Chiu K.P."/>
            <person name="Choudhary V."/>
            <person name="Christoffels A."/>
            <person name="Clutterbuck D.R."/>
            <person name="Crowe M.L."/>
            <person name="Dalla E."/>
            <person name="Dalrymple B.P."/>
            <person name="de Bono B."/>
            <person name="Della Gatta G."/>
            <person name="di Bernardo D."/>
            <person name="Down T."/>
            <person name="Engstrom P."/>
            <person name="Fagiolini M."/>
            <person name="Faulkner G."/>
            <person name="Fletcher C.F."/>
            <person name="Fukushima T."/>
            <person name="Furuno M."/>
            <person name="Futaki S."/>
            <person name="Gariboldi M."/>
            <person name="Georgii-Hemming P."/>
            <person name="Gingeras T.R."/>
            <person name="Gojobori T."/>
            <person name="Green R.E."/>
            <person name="Gustincich S."/>
            <person name="Harbers M."/>
            <person name="Hayashi Y."/>
            <person name="Hensch T.K."/>
            <person name="Hirokawa N."/>
            <person name="Hill D."/>
            <person name="Huminiecki L."/>
            <person name="Iacono M."/>
            <person name="Ikeo K."/>
            <person name="Iwama A."/>
            <person name="Ishikawa T."/>
            <person name="Jakt M."/>
            <person name="Kanapin A."/>
            <person name="Katoh M."/>
            <person name="Kawasawa Y."/>
            <person name="Kelso J."/>
            <person name="Kitamura H."/>
            <person name="Kitano H."/>
            <person name="Kollias G."/>
            <person name="Krishnan S.P."/>
            <person name="Kruger A."/>
            <person name="Kummerfeld S.K."/>
            <person name="Kurochkin I.V."/>
            <person name="Lareau L.F."/>
            <person name="Lazarevic D."/>
            <person name="Lipovich L."/>
            <person name="Liu J."/>
            <person name="Liuni S."/>
            <person name="McWilliam S."/>
            <person name="Madan Babu M."/>
            <person name="Madera M."/>
            <person name="Marchionni L."/>
            <person name="Matsuda H."/>
            <person name="Matsuzawa S."/>
            <person name="Miki H."/>
            <person name="Mignone F."/>
            <person name="Miyake S."/>
            <person name="Morris K."/>
            <person name="Mottagui-Tabar S."/>
            <person name="Mulder N."/>
            <person name="Nakano N."/>
            <person name="Nakauchi H."/>
            <person name="Ng P."/>
            <person name="Nilsson R."/>
            <person name="Nishiguchi S."/>
            <person name="Nishikawa S."/>
            <person name="Nori F."/>
            <person name="Ohara O."/>
            <person name="Okazaki Y."/>
            <person name="Orlando V."/>
            <person name="Pang K.C."/>
            <person name="Pavan W.J."/>
            <person name="Pavesi G."/>
            <person name="Pesole G."/>
            <person name="Petrovsky N."/>
            <person name="Piazza S."/>
            <person name="Reed J."/>
            <person name="Reid J.F."/>
            <person name="Ring B.Z."/>
            <person name="Ringwald M."/>
            <person name="Rost B."/>
            <person name="Ruan Y."/>
            <person name="Salzberg S.L."/>
            <person name="Sandelin A."/>
            <person name="Schneider C."/>
            <person name="Schoenbach C."/>
            <person name="Sekiguchi K."/>
            <person name="Semple C.A."/>
            <person name="Seno S."/>
            <person name="Sessa L."/>
            <person name="Sheng Y."/>
            <person name="Shibata Y."/>
            <person name="Shimada H."/>
            <person name="Shimada K."/>
            <person name="Silva D."/>
            <person name="Sinclair B."/>
            <person name="Sperling S."/>
            <person name="Stupka E."/>
            <person name="Sugiura K."/>
            <person name="Sultana R."/>
            <person name="Takenaka Y."/>
            <person name="Taki K."/>
            <person name="Tammoja K."/>
            <person name="Tan S.L."/>
            <person name="Tang S."/>
            <person name="Taylor M.S."/>
            <person name="Tegner J."/>
            <person name="Teichmann S.A."/>
            <person name="Ueda H.R."/>
            <person name="van Nimwegen E."/>
            <person name="Verardo R."/>
            <person name="Wei C.L."/>
            <person name="Yagi K."/>
            <person name="Yamanishi H."/>
            <person name="Zabarovsky E."/>
            <person name="Zhu S."/>
            <person name="Zimmer A."/>
            <person name="Hide W."/>
            <person name="Bult C."/>
            <person name="Grimmond S.M."/>
            <person name="Teasdale R.D."/>
            <person name="Liu E.T."/>
            <person name="Brusic V."/>
            <person name="Quackenbush J."/>
            <person name="Wahlestedt C."/>
            <person name="Mattick J.S."/>
            <person name="Hume D.A."/>
            <person name="Kai C."/>
            <person name="Sasaki D."/>
            <person name="Tomaru Y."/>
            <person name="Fukuda S."/>
            <person name="Kanamori-Katayama M."/>
            <person name="Suzuki M."/>
            <person name="Aoki J."/>
            <person name="Arakawa T."/>
            <person name="Iida J."/>
            <person name="Imamura K."/>
            <person name="Itoh M."/>
            <person name="Kato T."/>
            <person name="Kawaji H."/>
            <person name="Kawagashira N."/>
            <person name="Kawashima T."/>
            <person name="Kojima M."/>
            <person name="Kondo S."/>
            <person name="Konno H."/>
            <person name="Nakano K."/>
            <person name="Ninomiya N."/>
            <person name="Nishio T."/>
            <person name="Okada M."/>
            <person name="Plessy C."/>
            <person name="Shibata K."/>
            <person name="Shiraki T."/>
            <person name="Suzuki S."/>
            <person name="Tagami M."/>
            <person name="Waki K."/>
            <person name="Watahiki A."/>
            <person name="Okamura-Oho Y."/>
            <person name="Suzuki H."/>
            <person name="Kawai J."/>
            <person name="Hayashizaki Y."/>
        </authorList>
    </citation>
    <scope>NUCLEOTIDE SEQUENCE [LARGE SCALE MRNA]</scope>
    <source>
        <strain>C57BL/6J</strain>
        <tissue>Thymus</tissue>
    </source>
</reference>
<keyword id="KW-0072">Autophagy</keyword>
<keyword id="KW-0963">Cytoplasm</keyword>
<keyword id="KW-0378">Hydrolase</keyword>
<keyword id="KW-0443">Lipid metabolism</keyword>
<keyword id="KW-0645">Protease</keyword>
<keyword id="KW-0653">Protein transport</keyword>
<keyword id="KW-1185">Reference proteome</keyword>
<keyword id="KW-0788">Thiol protease</keyword>
<keyword id="KW-0813">Transport</keyword>
<keyword id="KW-0833">Ubl conjugation pathway</keyword>
<gene>
    <name evidence="6" type="primary">Atg4a</name>
    <name evidence="2" type="synonym">Apg4a</name>
    <name evidence="6" type="synonym">Autl2</name>
</gene>
<proteinExistence type="evidence at transcript level"/>
<name>ATG4A_MOUSE</name>